<sequence>MGNIMSASFAPECTDLKTKYDSCFNEWYSEKFLKGKSVENECSKQWYAYTTCVNAALVKQGIKPALDEAREEAPFENGGKLKEVDK</sequence>
<comment type="function">
    <text evidence="2 6 7 9 10 11">Involved in mitochondrial distribution and morphology. Mediates the import of UPS1, UPS2 and UPS3, 3 atypical mitochondrial intermembrane space (IMS) proteins lacking the two major IMS-targeting signals, into the intermembrane space. The UPS1:MDM35 complex mediates the transfer of phosphatidic acid (PA) between liposomes and probably functions as a PA transporter across the mitochondrion intermembrane space (PubMed:26071601, PubMed:26071602, PubMed:26235513). Phosphatidic acid import is required for cardiolipin (CL) synthesis in the mitochondrial inner membrane (PubMed:26071602).</text>
</comment>
<comment type="subunit">
    <text evidence="6 7 9 11">Interacts with UPS1, UPS2 and UPS3.</text>
</comment>
<comment type="interaction">
    <interactant intactId="EBI-2080774">
        <id>O60200</id>
    </interactant>
    <interactant intactId="EBI-30337">
        <id>Q05776</id>
        <label>UPS1</label>
    </interactant>
    <organismsDiffer>false</organismsDiffer>
    <experiments>5</experiments>
</comment>
<comment type="interaction">
    <interactant intactId="EBI-2080774">
        <id>O60200</id>
    </interactant>
    <interactant intactId="EBI-11337">
        <id>P35200</id>
        <label>UPS2</label>
    </interactant>
    <organismsDiffer>false</organismsDiffer>
    <experiments>6</experiments>
</comment>
<comment type="interaction">
    <interactant intactId="EBI-2080774">
        <id>O60200</id>
    </interactant>
    <interactant intactId="EBI-3830982">
        <id>Q04006</id>
        <label>UPS3</label>
    </interactant>
    <organismsDiffer>false</organismsDiffer>
    <experiments>3</experiments>
</comment>
<comment type="subcellular location">
    <subcellularLocation>
        <location evidence="3">Cytoplasm</location>
    </subcellularLocation>
    <subcellularLocation>
        <location evidence="3">Nucleus</location>
    </subcellularLocation>
    <subcellularLocation>
        <location evidence="5 6 7 8">Mitochondrion intermembrane space</location>
    </subcellularLocation>
</comment>
<comment type="miscellaneous">
    <text evidence="4">Present with 3870 molecules/cell in log phase SD medium.</text>
</comment>
<comment type="similarity">
    <text evidence="12">Belongs to the TRIAP1/MDM35 family.</text>
</comment>
<keyword id="KW-0002">3D-structure</keyword>
<keyword id="KW-0963">Cytoplasm</keyword>
<keyword id="KW-1015">Disulfide bond</keyword>
<keyword id="KW-0445">Lipid transport</keyword>
<keyword id="KW-0496">Mitochondrion</keyword>
<keyword id="KW-0539">Nucleus</keyword>
<keyword id="KW-1185">Reference proteome</keyword>
<keyword id="KW-0813">Transport</keyword>
<protein>
    <recommendedName>
        <fullName>Mitochondrial distribution and morphology protein 35</fullName>
    </recommendedName>
</protein>
<accession>O60200</accession>
<accession>D6VXN4</accession>
<accession>Q6Q599</accession>
<reference key="1">
    <citation type="journal article" date="1994" name="Yeast">
        <title>Sequence of a 28.6 kb region of yeast chromosome XI includes the FBA1 and TOA2 genes, an open reading frame (ORF) similar to a translationally controlled tumour protein, one ORF containing motifs also found in plant storage proteins and 13 ORFs with weak or no homology to known proteins.</title>
        <authorList>
            <person name="Rasmussen S.W."/>
        </authorList>
    </citation>
    <scope>NUCLEOTIDE SEQUENCE [GENOMIC DNA]</scope>
    <source>
        <strain>ATCC 204508 / S288c</strain>
    </source>
</reference>
<reference key="2">
    <citation type="journal article" date="1994" name="Nature">
        <title>Complete DNA sequence of yeast chromosome XI.</title>
        <authorList>
            <person name="Dujon B."/>
            <person name="Alexandraki D."/>
            <person name="Andre B."/>
            <person name="Ansorge W."/>
            <person name="Baladron V."/>
            <person name="Ballesta J.P.G."/>
            <person name="Banrevi A."/>
            <person name="Bolle P.-A."/>
            <person name="Bolotin-Fukuhara M."/>
            <person name="Bossier P."/>
            <person name="Bou G."/>
            <person name="Boyer J."/>
            <person name="Buitrago M.J."/>
            <person name="Cheret G."/>
            <person name="Colleaux L."/>
            <person name="Daignan-Fornier B."/>
            <person name="del Rey F."/>
            <person name="Dion C."/>
            <person name="Domdey H."/>
            <person name="Duesterhoeft A."/>
            <person name="Duesterhus S."/>
            <person name="Entian K.-D."/>
            <person name="Erfle H."/>
            <person name="Esteban P.F."/>
            <person name="Feldmann H."/>
            <person name="Fernandes L."/>
            <person name="Fobo G.M."/>
            <person name="Fritz C."/>
            <person name="Fukuhara H."/>
            <person name="Gabel C."/>
            <person name="Gaillon L."/>
            <person name="Garcia-Cantalejo J.M."/>
            <person name="Garcia-Ramirez J.J."/>
            <person name="Gent M.E."/>
            <person name="Ghazvini M."/>
            <person name="Goffeau A."/>
            <person name="Gonzalez A."/>
            <person name="Grothues D."/>
            <person name="Guerreiro P."/>
            <person name="Hegemann J.H."/>
            <person name="Hewitt N."/>
            <person name="Hilger F."/>
            <person name="Hollenberg C.P."/>
            <person name="Horaitis O."/>
            <person name="Indge K.J."/>
            <person name="Jacquier A."/>
            <person name="James C.M."/>
            <person name="Jauniaux J.-C."/>
            <person name="Jimenez A."/>
            <person name="Keuchel H."/>
            <person name="Kirchrath L."/>
            <person name="Kleine K."/>
            <person name="Koetter P."/>
            <person name="Legrain P."/>
            <person name="Liebl S."/>
            <person name="Louis E.J."/>
            <person name="Maia e Silva A."/>
            <person name="Marck C."/>
            <person name="Monnier A.-L."/>
            <person name="Moestl D."/>
            <person name="Mueller S."/>
            <person name="Obermaier B."/>
            <person name="Oliver S.G."/>
            <person name="Pallier C."/>
            <person name="Pascolo S."/>
            <person name="Pfeiffer F."/>
            <person name="Philippsen P."/>
            <person name="Planta R.J."/>
            <person name="Pohl F.M."/>
            <person name="Pohl T.M."/>
            <person name="Poehlmann R."/>
            <person name="Portetelle D."/>
            <person name="Purnelle B."/>
            <person name="Puzos V."/>
            <person name="Ramezani Rad M."/>
            <person name="Rasmussen S.W."/>
            <person name="Remacha M.A."/>
            <person name="Revuelta J.L."/>
            <person name="Richard G.-F."/>
            <person name="Rieger M."/>
            <person name="Rodrigues-Pousada C."/>
            <person name="Rose M."/>
            <person name="Rupp T."/>
            <person name="Santos M.A."/>
            <person name="Schwager C."/>
            <person name="Sensen C."/>
            <person name="Skala J."/>
            <person name="Soares H."/>
            <person name="Sor F."/>
            <person name="Stegemann J."/>
            <person name="Tettelin H."/>
            <person name="Thierry A."/>
            <person name="Tzermia M."/>
            <person name="Urrestarazu L.A."/>
            <person name="van Dyck L."/>
            <person name="van Vliet-Reedijk J.C."/>
            <person name="Valens M."/>
            <person name="Vandenbol M."/>
            <person name="Vilela C."/>
            <person name="Vissers S."/>
            <person name="von Wettstein D."/>
            <person name="Voss H."/>
            <person name="Wiemann S."/>
            <person name="Xu G."/>
            <person name="Zimmermann J."/>
            <person name="Haasemann M."/>
            <person name="Becker I."/>
            <person name="Mewes H.-W."/>
        </authorList>
    </citation>
    <scope>NUCLEOTIDE SEQUENCE [LARGE SCALE GENOMIC DNA]</scope>
    <source>
        <strain>ATCC 204508 / S288c</strain>
    </source>
</reference>
<reference key="3">
    <citation type="journal article" date="2014" name="G3 (Bethesda)">
        <title>The reference genome sequence of Saccharomyces cerevisiae: Then and now.</title>
        <authorList>
            <person name="Engel S.R."/>
            <person name="Dietrich F.S."/>
            <person name="Fisk D.G."/>
            <person name="Binkley G."/>
            <person name="Balakrishnan R."/>
            <person name="Costanzo M.C."/>
            <person name="Dwight S.S."/>
            <person name="Hitz B.C."/>
            <person name="Karra K."/>
            <person name="Nash R.S."/>
            <person name="Weng S."/>
            <person name="Wong E.D."/>
            <person name="Lloyd P."/>
            <person name="Skrzypek M.S."/>
            <person name="Miyasato S.R."/>
            <person name="Simison M."/>
            <person name="Cherry J.M."/>
        </authorList>
    </citation>
    <scope>GENOME REANNOTATION</scope>
    <source>
        <strain>ATCC 204508 / S288c</strain>
    </source>
</reference>
<reference key="4">
    <citation type="journal article" date="2007" name="Genome Res.">
        <title>Approaching a complete repository of sequence-verified protein-encoding clones for Saccharomyces cerevisiae.</title>
        <authorList>
            <person name="Hu Y."/>
            <person name="Rolfs A."/>
            <person name="Bhullar B."/>
            <person name="Murthy T.V.S."/>
            <person name="Zhu C."/>
            <person name="Berger M.F."/>
            <person name="Camargo A.A."/>
            <person name="Kelley F."/>
            <person name="McCarron S."/>
            <person name="Jepson D."/>
            <person name="Richardson A."/>
            <person name="Raphael J."/>
            <person name="Moreira D."/>
            <person name="Taycher E."/>
            <person name="Zuo D."/>
            <person name="Mohr S."/>
            <person name="Kane M.F."/>
            <person name="Williamson J."/>
            <person name="Simpson A.J.G."/>
            <person name="Bulyk M.L."/>
            <person name="Harlow E."/>
            <person name="Marsischky G."/>
            <person name="Kolodner R.D."/>
            <person name="LaBaer J."/>
        </authorList>
    </citation>
    <scope>NUCLEOTIDE SEQUENCE [GENOMIC DNA]</scope>
    <source>
        <strain>ATCC 204508 / S288c</strain>
    </source>
</reference>
<reference key="5">
    <citation type="journal article" date="1997" name="Yeast">
        <title>Characterization of new proteins found by analysis of short open reading frames from the full yeast genome.</title>
        <authorList>
            <person name="Andrade M.A."/>
            <person name="Daruvar A."/>
            <person name="Casari G."/>
            <person name="Schneider R."/>
            <person name="Termier M."/>
            <person name="Sander C."/>
        </authorList>
    </citation>
    <scope>IDENTIFICATION</scope>
</reference>
<reference key="6">
    <citation type="journal article" date="2002" name="Mol. Biol. Cell">
        <title>Genetic basis of mitochondrial function and morphology in Saccharomyces cerevisiae.</title>
        <authorList>
            <person name="Dimmer K.S."/>
            <person name="Fritz S."/>
            <person name="Fuchs F."/>
            <person name="Messerschmitt M."/>
            <person name="Weinbach N."/>
            <person name="Neupert W."/>
            <person name="Westermann B."/>
        </authorList>
    </citation>
    <scope>FUNCTION</scope>
</reference>
<reference key="7">
    <citation type="journal article" date="2003" name="Nature">
        <title>Global analysis of protein localization in budding yeast.</title>
        <authorList>
            <person name="Huh W.-K."/>
            <person name="Falvo J.V."/>
            <person name="Gerke L.C."/>
            <person name="Carroll A.S."/>
            <person name="Howson R.W."/>
            <person name="Weissman J.S."/>
            <person name="O'Shea E.K."/>
        </authorList>
    </citation>
    <scope>SUBCELLULAR LOCATION [LARGE SCALE ANALYSIS]</scope>
</reference>
<reference key="8">
    <citation type="journal article" date="2003" name="Nature">
        <title>Global analysis of protein expression in yeast.</title>
        <authorList>
            <person name="Ghaemmaghami S."/>
            <person name="Huh W.-K."/>
            <person name="Bower K."/>
            <person name="Howson R.W."/>
            <person name="Belle A."/>
            <person name="Dephoure N."/>
            <person name="O'Shea E.K."/>
            <person name="Weissman J.S."/>
        </authorList>
    </citation>
    <scope>LEVEL OF PROTEIN EXPRESSION [LARGE SCALE ANALYSIS]</scope>
</reference>
<reference key="9">
    <citation type="journal article" date="2007" name="J. Mol. Biol.">
        <title>Novel mitochondrial intermembrane space proteins as substrates of the MIA import pathway.</title>
        <authorList>
            <person name="Gabriel K."/>
            <person name="Milenkovic D."/>
            <person name="Chacinska A."/>
            <person name="Mueller J."/>
            <person name="Guiard B."/>
            <person name="Pfanner N."/>
            <person name="Meisinger C."/>
        </authorList>
    </citation>
    <scope>SUBCELLULAR LOCATION</scope>
</reference>
<reference key="10">
    <citation type="journal article" date="2010" name="EMBO J.">
        <title>Mdm35p imports Ups proteins into the mitochondrial intermembrane space by functional complex formation.</title>
        <authorList>
            <person name="Tamura Y."/>
            <person name="Iijima M."/>
            <person name="Sesaki H."/>
        </authorList>
    </citation>
    <scope>FUNCTION</scope>
    <scope>SUBCELLULAR LOCATION</scope>
    <scope>INTERACTION WITH UPS1; UPS2 AND UPS3</scope>
</reference>
<reference key="11">
    <citation type="journal article" date="2010" name="EMBO J.">
        <title>Regulation of mitochondrial phospholipids by Ups1/PRELI-like proteins depends on proteolysis and Mdm35.</title>
        <authorList>
            <person name="Potting C."/>
            <person name="Wilmes C."/>
            <person name="Engmann T."/>
            <person name="Osman C."/>
            <person name="Langer T."/>
        </authorList>
    </citation>
    <scope>FUNCTION</scope>
    <scope>SUBCELLULAR LOCATION</scope>
    <scope>INTERACTION WITH UPS1 AND UPS2</scope>
</reference>
<reference key="12">
    <citation type="journal article" date="2012" name="Mol. Cell. Proteomics">
        <title>Intermembrane space proteome of yeast mitochondria.</title>
        <authorList>
            <person name="Voegtle F.N."/>
            <person name="Burkhart J.M."/>
            <person name="Rao S."/>
            <person name="Gerbeth C."/>
            <person name="Hinrichs J."/>
            <person name="Martinou J.C."/>
            <person name="Chacinska A."/>
            <person name="Sickmann A."/>
            <person name="Zahedi R.P."/>
            <person name="Meisinger C."/>
        </authorList>
    </citation>
    <scope>IDENTIFICATION BY MASS SPECTROMETRY</scope>
    <scope>SUBCELLULAR LOCATION [LARGE SCALE ANALYSIS]</scope>
</reference>
<reference key="13">
    <citation type="journal article" date="2015" name="EMBO Rep.">
        <title>Structural insight into the TRIAP1/PRELI-like domain family of mitochondrial phospholipid transfer complexes.</title>
        <authorList>
            <person name="Miliara X."/>
            <person name="Garnett J.A."/>
            <person name="Tatsuta T."/>
            <person name="Abid Ali F."/>
            <person name="Baldie H."/>
            <person name="Perez-Dorado I."/>
            <person name="Simpson P."/>
            <person name="Yague E."/>
            <person name="Langer T."/>
            <person name="Matthews S."/>
        </authorList>
    </citation>
    <scope>FUNCTION</scope>
</reference>
<reference key="14">
    <citation type="journal article" date="2015" name="EMBO Rep.">
        <title>Structural basis of intramitochondrial phosphatidic acid transport mediated by Ups1-Mdm35 complex.</title>
        <authorList>
            <person name="Yu F."/>
            <person name="He F."/>
            <person name="Yao H."/>
            <person name="Wang C."/>
            <person name="Wang J."/>
            <person name="Li J."/>
            <person name="Qi X."/>
            <person name="Xue H."/>
            <person name="Ding J."/>
            <person name="Zhang P."/>
        </authorList>
    </citation>
    <scope>X-RAY CRYSTALLOGRAPHY (2.00 ANGSTROMS) OF 6-75 IN COMPLEX WITH UPS1</scope>
    <scope>INTERACTION WITH UPS1</scope>
    <scope>DISULFIDE BONDS</scope>
</reference>
<reference key="15">
    <citation type="journal article" date="2015" name="Nat. Commun.">
        <title>Structural and mechanistic insights into phospholipid transfer by Ups1-Mdm35 in mitochondria.</title>
        <authorList>
            <person name="Watanabe Y."/>
            <person name="Tamura Y."/>
            <person name="Kawano S."/>
            <person name="Endo T."/>
        </authorList>
    </citation>
    <scope>X-RAY CRYSTALLOGRAPHY (1.40 ANGSTROMS) OF 1-81 IN COMPLEX WITH UPS1</scope>
    <scope>INTERACTION WITH UPS1 AND UPS2</scope>
    <scope>DISULFIDE BONDS</scope>
    <scope>MUTAGENESIS OF PHE-24; TRP-27; TYR-28 AND PHE-32</scope>
</reference>
<feature type="chain" id="PRO_0000220526" description="Mitochondrial distribution and morphology protein 35">
    <location>
        <begin position="1"/>
        <end position="86"/>
    </location>
</feature>
<feature type="domain" description="CHCH" evidence="1">
    <location>
        <begin position="10"/>
        <end position="60"/>
    </location>
</feature>
<feature type="short sequence motif" description="Cx9C motif 1" evidence="1">
    <location>
        <begin position="13"/>
        <end position="23"/>
    </location>
</feature>
<feature type="short sequence motif" description="Cx9C motif 2" evidence="1">
    <location>
        <begin position="42"/>
        <end position="52"/>
    </location>
</feature>
<feature type="disulfide bond" evidence="1 9 11 13 14 15 16 17">
    <location>
        <begin position="13"/>
        <end position="52"/>
    </location>
</feature>
<feature type="disulfide bond" evidence="1 9 11 13 14 15 16 17">
    <location>
        <begin position="23"/>
        <end position="42"/>
    </location>
</feature>
<feature type="mutagenesis site" description="Impairs interaction with UPS1 and UPS2; when associated with A-27 and A-28." evidence="11">
    <original>F</original>
    <variation>A</variation>
    <location>
        <position position="24"/>
    </location>
</feature>
<feature type="mutagenesis site" description="Impairs interaction with UPS1 and UPS2; when associated with A-24 and A-28." evidence="11">
    <original>W</original>
    <variation>A</variation>
    <location>
        <position position="27"/>
    </location>
</feature>
<feature type="mutagenesis site" description="Impairs interaction with UPS1 and UPS2; when associated with A-24 and A-27." evidence="11">
    <original>Y</original>
    <variation>A</variation>
    <location>
        <position position="28"/>
    </location>
</feature>
<feature type="mutagenesis site" description="Impairs interaction with UPS1 and UPS2." evidence="11">
    <original>F</original>
    <variation>A</variation>
    <location>
        <position position="32"/>
    </location>
</feature>
<feature type="helix" evidence="18">
    <location>
        <begin position="4"/>
        <end position="9"/>
    </location>
</feature>
<feature type="helix" evidence="19">
    <location>
        <begin position="11"/>
        <end position="13"/>
    </location>
</feature>
<feature type="helix" evidence="19">
    <location>
        <begin position="14"/>
        <end position="30"/>
    </location>
</feature>
<feature type="turn" evidence="19">
    <location>
        <begin position="31"/>
        <end position="35"/>
    </location>
</feature>
<feature type="helix" evidence="19">
    <location>
        <begin position="43"/>
        <end position="57"/>
    </location>
</feature>
<feature type="helix" evidence="19">
    <location>
        <begin position="63"/>
        <end position="70"/>
    </location>
</feature>
<evidence type="ECO:0000255" key="1">
    <source>
        <dbReference type="PROSITE-ProRule" id="PRU01150"/>
    </source>
</evidence>
<evidence type="ECO:0000269" key="2">
    <source>
    </source>
</evidence>
<evidence type="ECO:0000269" key="3">
    <source>
    </source>
</evidence>
<evidence type="ECO:0000269" key="4">
    <source>
    </source>
</evidence>
<evidence type="ECO:0000269" key="5">
    <source>
    </source>
</evidence>
<evidence type="ECO:0000269" key="6">
    <source>
    </source>
</evidence>
<evidence type="ECO:0000269" key="7">
    <source>
    </source>
</evidence>
<evidence type="ECO:0000269" key="8">
    <source>
    </source>
</evidence>
<evidence type="ECO:0000269" key="9">
    <source>
    </source>
</evidence>
<evidence type="ECO:0000269" key="10">
    <source>
    </source>
</evidence>
<evidence type="ECO:0000269" key="11">
    <source>
    </source>
</evidence>
<evidence type="ECO:0000305" key="12"/>
<evidence type="ECO:0007744" key="13">
    <source>
        <dbReference type="PDB" id="4XHR"/>
    </source>
</evidence>
<evidence type="ECO:0007744" key="14">
    <source>
        <dbReference type="PDB" id="4XIZ"/>
    </source>
</evidence>
<evidence type="ECO:0007744" key="15">
    <source>
        <dbReference type="PDB" id="4YTV"/>
    </source>
</evidence>
<evidence type="ECO:0007744" key="16">
    <source>
        <dbReference type="PDB" id="4YTW"/>
    </source>
</evidence>
<evidence type="ECO:0007744" key="17">
    <source>
        <dbReference type="PDB" id="4YTX"/>
    </source>
</evidence>
<evidence type="ECO:0007829" key="18">
    <source>
        <dbReference type="PDB" id="4YTV"/>
    </source>
</evidence>
<evidence type="ECO:0007829" key="19">
    <source>
        <dbReference type="PDB" id="4YTW"/>
    </source>
</evidence>
<organism>
    <name type="scientific">Saccharomyces cerevisiae (strain ATCC 204508 / S288c)</name>
    <name type="common">Baker's yeast</name>
    <dbReference type="NCBI Taxonomy" id="559292"/>
    <lineage>
        <taxon>Eukaryota</taxon>
        <taxon>Fungi</taxon>
        <taxon>Dikarya</taxon>
        <taxon>Ascomycota</taxon>
        <taxon>Saccharomycotina</taxon>
        <taxon>Saccharomycetes</taxon>
        <taxon>Saccharomycetales</taxon>
        <taxon>Saccharomycetaceae</taxon>
        <taxon>Saccharomyces</taxon>
    </lineage>
</organism>
<dbReference type="EMBL" id="Z28054">
    <property type="protein sequence ID" value="CAA81891.1"/>
    <property type="molecule type" value="Genomic_DNA"/>
</dbReference>
<dbReference type="EMBL" id="Z28052">
    <property type="protein sequence ID" value="CAA81889.1"/>
    <property type="molecule type" value="Genomic_DNA"/>
</dbReference>
<dbReference type="EMBL" id="AY558262">
    <property type="protein sequence ID" value="AAS56588.1"/>
    <property type="molecule type" value="Genomic_DNA"/>
</dbReference>
<dbReference type="EMBL" id="BK006944">
    <property type="protein sequence ID" value="DAA09104.1"/>
    <property type="molecule type" value="Genomic_DNA"/>
</dbReference>
<dbReference type="RefSeq" id="NP_012870.1">
    <property type="nucleotide sequence ID" value="NM_001184336.1"/>
</dbReference>
<dbReference type="PDB" id="4XHR">
    <property type="method" value="X-ray"/>
    <property type="resolution" value="2.55 A"/>
    <property type="chains" value="M/N=1-86"/>
</dbReference>
<dbReference type="PDB" id="4XIZ">
    <property type="method" value="X-ray"/>
    <property type="resolution" value="2.00 A"/>
    <property type="chains" value="M/N=6-75"/>
</dbReference>
<dbReference type="PDB" id="4YTV">
    <property type="method" value="X-ray"/>
    <property type="resolution" value="1.45 A"/>
    <property type="chains" value="A=1-81"/>
</dbReference>
<dbReference type="PDB" id="4YTW">
    <property type="method" value="X-ray"/>
    <property type="resolution" value="1.40 A"/>
    <property type="chains" value="A/C=1-81"/>
</dbReference>
<dbReference type="PDB" id="4YTX">
    <property type="method" value="X-ray"/>
    <property type="resolution" value="3.20 A"/>
    <property type="chains" value="A/C/E/G/I/K/M/O=1-81"/>
</dbReference>
<dbReference type="PDB" id="5JQL">
    <property type="method" value="X-ray"/>
    <property type="resolution" value="2.90 A"/>
    <property type="chains" value="B/D/F/H/J/L=1-86"/>
</dbReference>
<dbReference type="PDB" id="5JQM">
    <property type="method" value="X-ray"/>
    <property type="resolution" value="1.50 A"/>
    <property type="chains" value="A/B/C=1-86"/>
</dbReference>
<dbReference type="PDB" id="6KYL">
    <property type="method" value="X-ray"/>
    <property type="resolution" value="3.55 A"/>
    <property type="chains" value="A/C=1-86"/>
</dbReference>
<dbReference type="PDBsum" id="4XHR"/>
<dbReference type="PDBsum" id="4XIZ"/>
<dbReference type="PDBsum" id="4YTV"/>
<dbReference type="PDBsum" id="4YTW"/>
<dbReference type="PDBsum" id="4YTX"/>
<dbReference type="PDBsum" id="5JQL"/>
<dbReference type="PDBsum" id="5JQM"/>
<dbReference type="PDBsum" id="6KYL"/>
<dbReference type="SMR" id="O60200"/>
<dbReference type="BioGRID" id="34080">
    <property type="interactions" value="414"/>
</dbReference>
<dbReference type="FunCoup" id="O60200">
    <property type="interactions" value="272"/>
</dbReference>
<dbReference type="IntAct" id="O60200">
    <property type="interactions" value="3"/>
</dbReference>
<dbReference type="MINT" id="O60200"/>
<dbReference type="STRING" id="4932.YKL053C-A"/>
<dbReference type="PaxDb" id="4932-YKL053C-A"/>
<dbReference type="PeptideAtlas" id="O60200"/>
<dbReference type="EnsemblFungi" id="YKL053C-A_mRNA">
    <property type="protein sequence ID" value="YKL053C-A"/>
    <property type="gene ID" value="YKL053C-A"/>
</dbReference>
<dbReference type="GeneID" id="853812"/>
<dbReference type="KEGG" id="sce:YKL053C-A"/>
<dbReference type="AGR" id="SGD:S000007243"/>
<dbReference type="SGD" id="S000007243">
    <property type="gene designation" value="MDM35"/>
</dbReference>
<dbReference type="VEuPathDB" id="FungiDB:YKL053C-A"/>
<dbReference type="eggNOG" id="KOG3481">
    <property type="taxonomic scope" value="Eukaryota"/>
</dbReference>
<dbReference type="GeneTree" id="ENSGT00940000176689"/>
<dbReference type="HOGENOM" id="CLU_101473_2_0_1"/>
<dbReference type="InParanoid" id="O60200"/>
<dbReference type="OMA" id="KKYDDCF"/>
<dbReference type="OrthoDB" id="19091at2759"/>
<dbReference type="BioCyc" id="YEAST:G3O-32092-MONOMER"/>
<dbReference type="Reactome" id="R-SCE-6803204">
    <property type="pathway name" value="TP53 Regulates Transcription of Genes Involved in Cytochrome C Release"/>
</dbReference>
<dbReference type="BioGRID-ORCS" id="853812">
    <property type="hits" value="0 hits in 10 CRISPR screens"/>
</dbReference>
<dbReference type="EvolutionaryTrace" id="O60200"/>
<dbReference type="PRO" id="PR:O60200"/>
<dbReference type="Proteomes" id="UP000002311">
    <property type="component" value="Chromosome XI"/>
</dbReference>
<dbReference type="RNAct" id="O60200">
    <property type="molecule type" value="protein"/>
</dbReference>
<dbReference type="GO" id="GO:0005737">
    <property type="term" value="C:cytoplasm"/>
    <property type="evidence" value="ECO:0007005"/>
    <property type="project" value="SGD"/>
</dbReference>
<dbReference type="GO" id="GO:0005758">
    <property type="term" value="C:mitochondrial intermembrane space"/>
    <property type="evidence" value="ECO:0000314"/>
    <property type="project" value="SGD"/>
</dbReference>
<dbReference type="GO" id="GO:0005739">
    <property type="term" value="C:mitochondrion"/>
    <property type="evidence" value="ECO:0007005"/>
    <property type="project" value="SGD"/>
</dbReference>
<dbReference type="GO" id="GO:0005634">
    <property type="term" value="C:nucleus"/>
    <property type="evidence" value="ECO:0007005"/>
    <property type="project" value="SGD"/>
</dbReference>
<dbReference type="GO" id="GO:0120009">
    <property type="term" value="P:intermembrane lipid transfer"/>
    <property type="evidence" value="ECO:0007669"/>
    <property type="project" value="GOC"/>
</dbReference>
<dbReference type="GO" id="GO:0033108">
    <property type="term" value="P:mitochondrial respiratory chain complex assembly"/>
    <property type="evidence" value="ECO:0000315"/>
    <property type="project" value="SGD"/>
</dbReference>
<dbReference type="GO" id="GO:0007005">
    <property type="term" value="P:mitochondrion organization"/>
    <property type="evidence" value="ECO:0000315"/>
    <property type="project" value="SGD"/>
</dbReference>
<dbReference type="GO" id="GO:0045332">
    <property type="term" value="P:phospholipid translocation"/>
    <property type="evidence" value="ECO:0000314"/>
    <property type="project" value="SGD"/>
</dbReference>
<dbReference type="GO" id="GO:0015914">
    <property type="term" value="P:phospholipid transport"/>
    <property type="evidence" value="ECO:0000314"/>
    <property type="project" value="SGD"/>
</dbReference>
<dbReference type="DisProt" id="DP02325"/>
<dbReference type="InterPro" id="IPR007918">
    <property type="entry name" value="MDM35_apoptosis"/>
</dbReference>
<dbReference type="PANTHER" id="PTHR46403">
    <property type="entry name" value="TP53-REGULATED INHIBITOR OF APOPTOSIS 1"/>
    <property type="match status" value="1"/>
</dbReference>
<dbReference type="PANTHER" id="PTHR46403:SF1">
    <property type="entry name" value="TP53-REGULATED INHIBITOR OF APOPTOSIS 1"/>
    <property type="match status" value="1"/>
</dbReference>
<dbReference type="Pfam" id="PF05254">
    <property type="entry name" value="UPF0203"/>
    <property type="match status" value="1"/>
</dbReference>
<dbReference type="PROSITE" id="PS51808">
    <property type="entry name" value="CHCH"/>
    <property type="match status" value="1"/>
</dbReference>
<proteinExistence type="evidence at protein level"/>
<name>MDM35_YEAST</name>
<gene>
    <name type="primary">MDM35</name>
    <name type="ordered locus">YKL053C-A</name>
</gene>